<organism>
    <name type="scientific">Homo sapiens</name>
    <name type="common">Human</name>
    <dbReference type="NCBI Taxonomy" id="9606"/>
    <lineage>
        <taxon>Eukaryota</taxon>
        <taxon>Metazoa</taxon>
        <taxon>Chordata</taxon>
        <taxon>Craniata</taxon>
        <taxon>Vertebrata</taxon>
        <taxon>Euteleostomi</taxon>
        <taxon>Mammalia</taxon>
        <taxon>Eutheria</taxon>
        <taxon>Euarchontoglires</taxon>
        <taxon>Primates</taxon>
        <taxon>Haplorrhini</taxon>
        <taxon>Catarrhini</taxon>
        <taxon>Hominidae</taxon>
        <taxon>Homo</taxon>
    </lineage>
</organism>
<reference key="1">
    <citation type="journal article" date="2001" name="Gene">
        <title>Calcium channel gamma subunits provide insights into the evolution of this gene family.</title>
        <authorList>
            <person name="Chu P.-J."/>
            <person name="Robertson H.M."/>
            <person name="Best P.M."/>
        </authorList>
    </citation>
    <scope>NUCLEOTIDE SEQUENCE [MRNA]</scope>
</reference>
<reference key="2">
    <citation type="journal article" date="2004" name="Nature">
        <title>The DNA sequence and biology of human chromosome 19.</title>
        <authorList>
            <person name="Grimwood J."/>
            <person name="Gordon L.A."/>
            <person name="Olsen A.S."/>
            <person name="Terry A."/>
            <person name="Schmutz J."/>
            <person name="Lamerdin J.E."/>
            <person name="Hellsten U."/>
            <person name="Goodstein D."/>
            <person name="Couronne O."/>
            <person name="Tran-Gyamfi M."/>
            <person name="Aerts A."/>
            <person name="Altherr M."/>
            <person name="Ashworth L."/>
            <person name="Bajorek E."/>
            <person name="Black S."/>
            <person name="Branscomb E."/>
            <person name="Caenepeel S."/>
            <person name="Carrano A.V."/>
            <person name="Caoile C."/>
            <person name="Chan Y.M."/>
            <person name="Christensen M."/>
            <person name="Cleland C.A."/>
            <person name="Copeland A."/>
            <person name="Dalin E."/>
            <person name="Dehal P."/>
            <person name="Denys M."/>
            <person name="Detter J.C."/>
            <person name="Escobar J."/>
            <person name="Flowers D."/>
            <person name="Fotopulos D."/>
            <person name="Garcia C."/>
            <person name="Georgescu A.M."/>
            <person name="Glavina T."/>
            <person name="Gomez M."/>
            <person name="Gonzales E."/>
            <person name="Groza M."/>
            <person name="Hammon N."/>
            <person name="Hawkins T."/>
            <person name="Haydu L."/>
            <person name="Ho I."/>
            <person name="Huang W."/>
            <person name="Israni S."/>
            <person name="Jett J."/>
            <person name="Kadner K."/>
            <person name="Kimball H."/>
            <person name="Kobayashi A."/>
            <person name="Larionov V."/>
            <person name="Leem S.-H."/>
            <person name="Lopez F."/>
            <person name="Lou Y."/>
            <person name="Lowry S."/>
            <person name="Malfatti S."/>
            <person name="Martinez D."/>
            <person name="McCready P.M."/>
            <person name="Medina C."/>
            <person name="Morgan J."/>
            <person name="Nelson K."/>
            <person name="Nolan M."/>
            <person name="Ovcharenko I."/>
            <person name="Pitluck S."/>
            <person name="Pollard M."/>
            <person name="Popkie A.P."/>
            <person name="Predki P."/>
            <person name="Quan G."/>
            <person name="Ramirez L."/>
            <person name="Rash S."/>
            <person name="Retterer J."/>
            <person name="Rodriguez A."/>
            <person name="Rogers S."/>
            <person name="Salamov A."/>
            <person name="Salazar A."/>
            <person name="She X."/>
            <person name="Smith D."/>
            <person name="Slezak T."/>
            <person name="Solovyev V."/>
            <person name="Thayer N."/>
            <person name="Tice H."/>
            <person name="Tsai M."/>
            <person name="Ustaszewska A."/>
            <person name="Vo N."/>
            <person name="Wagner M."/>
            <person name="Wheeler J."/>
            <person name="Wu K."/>
            <person name="Xie G."/>
            <person name="Yang J."/>
            <person name="Dubchak I."/>
            <person name="Furey T.S."/>
            <person name="DeJong P."/>
            <person name="Dickson M."/>
            <person name="Gordon D."/>
            <person name="Eichler E.E."/>
            <person name="Pennacchio L.A."/>
            <person name="Richardson P."/>
            <person name="Stubbs L."/>
            <person name="Rokhsar D.S."/>
            <person name="Myers R.M."/>
            <person name="Rubin E.M."/>
            <person name="Lucas S.M."/>
        </authorList>
    </citation>
    <scope>NUCLEOTIDE SEQUENCE [LARGE SCALE GENOMIC DNA]</scope>
</reference>
<reference key="3">
    <citation type="submission" date="2000-02" db="EMBL/GenBank/DDBJ databases">
        <title>Proposed Homo sapiens voltage-gated calcium channel gamma-6 subunit.</title>
        <authorList>
            <person name="Black J.L. III"/>
            <person name="Kryzer T.J."/>
            <person name="Lennon V.A."/>
        </authorList>
    </citation>
    <scope>NUCLEOTIDE SEQUENCE [MRNA] OF 3-204</scope>
    <source>
        <tissue>Cerebellum</tissue>
    </source>
</reference>
<reference key="4">
    <citation type="journal article" date="2001" name="Genomics">
        <title>A cluster of three novel Ca(2+) channel gamma subunit genes on chromosome 19q13.4: evolution and expression profile of the gamma subunit gene family.</title>
        <authorList>
            <person name="Burgess D.L."/>
            <person name="Gefrides L.A."/>
            <person name="Foreman P.J."/>
            <person name="Noebels J.L."/>
        </authorList>
    </citation>
    <scope>NUCLEOTIDE SEQUENCE [MRNA] OF 12-425</scope>
</reference>
<reference key="5">
    <citation type="journal article" date="2010" name="Neuron">
        <title>Hippocampal AMPA receptor gating controlled by both TARP and cornichon proteins.</title>
        <authorList>
            <person name="Kato A.S."/>
            <person name="Gill M.B."/>
            <person name="Ho M.T."/>
            <person name="Yu H."/>
            <person name="Tu Y."/>
            <person name="Siuda E.R."/>
            <person name="Wang H."/>
            <person name="Qian Y.W."/>
            <person name="Nisenbaum E.S."/>
            <person name="Tomita S."/>
            <person name="Bredt D.S."/>
        </authorList>
    </citation>
    <scope>FUNCTION</scope>
</reference>
<reference key="6">
    <citation type="journal article" date="2010" name="Proc. Natl. Acad. Sci. U.S.A.">
        <title>Functional comparison of the effects of TARPs and cornichons on AMPA receptor trafficking and gating.</title>
        <authorList>
            <person name="Shi Y."/>
            <person name="Suh Y.H."/>
            <person name="Milstein A.D."/>
            <person name="Isozaki K."/>
            <person name="Schmid S.M."/>
            <person name="Roche K.W."/>
            <person name="Nicoll R.A."/>
        </authorList>
    </citation>
    <scope>FUNCTION</scope>
</reference>
<reference key="7">
    <citation type="journal article" date="2011" name="FASEB J.">
        <title>Cardiac L-type calcium channel (Cav1.2) associates with gamma subunits.</title>
        <authorList>
            <person name="Yang L."/>
            <person name="Katchman A."/>
            <person name="Morrow J.P."/>
            <person name="Doshi D."/>
            <person name="Marx S.O."/>
        </authorList>
    </citation>
    <scope>TISSUE SPECIFICITY</scope>
</reference>
<name>CCG8_HUMAN</name>
<comment type="function">
    <text evidence="1 5 7">Regulates the activity of L-type calcium channels that contain CACNA1C as pore-forming subunit (By similarity). Regulates the trafficking and gating properties of AMPA-selective glutamate receptors (AMPARs). Promotes their targeting to the cell membrane and synapses and modulates their gating properties by slowing their rates of activation, deactivation and desensitization and by mediating their resensitization. Does not show subunit-specific AMPA receptor regulation and regulates all AMPAR subunits.</text>
</comment>
<comment type="subunit">
    <text evidence="1">Interacts with CACNA1C. Identified in a complex with the L-type calcium channel subunits CACNA1C, CACNA2D1 and either CACNB1 or CACNB2. Acts as an auxiliary subunit for AMPA-selective glutamate receptors (AMPARs). Found in a complex with GRIA1, GRIA2, GRIA3, GRIA4, CNIH2, CNIH3, CACNG2, CACNG3, CACNG4, CACNG5 and CACNG7. Interacts with CNIH2. Found in a complex with GRIA1, GRIA2, GRIA3, GRIA4, DLG4 and CNIH2 (By similarity).</text>
</comment>
<comment type="subcellular location">
    <subcellularLocation>
        <location evidence="1">Cell membrane</location>
        <topology evidence="8">Multi-pass membrane protein</topology>
    </subcellularLocation>
    <subcellularLocation>
        <location evidence="1">Postsynaptic density membrane</location>
    </subcellularLocation>
</comment>
<comment type="tissue specificity">
    <text evidence="6">Detected in heart left ventricle.</text>
</comment>
<comment type="PTM">
    <text evidence="2">Palmitoylated. Probably palmitoylated by ZDHHC3 and ZDHHC7.</text>
</comment>
<comment type="similarity">
    <text evidence="8">Belongs to the PMP-22/EMP/MP20 family. CACNG subfamily.</text>
</comment>
<comment type="sequence caution" evidence="8">
    <conflict type="miscellaneous discrepancy">
        <sequence resource="EMBL-CDS" id="AAK15019"/>
    </conflict>
    <text>Contaminating sequence. Sequence of unknown origin in the N-terminal part.</text>
</comment>
<comment type="sequence caution" evidence="8">
    <conflict type="frameshift">
        <sequence resource="EMBL-CDS" id="AAL50049"/>
    </conflict>
</comment>
<dbReference type="EMBL" id="AF361354">
    <property type="protein sequence ID" value="AAL50049.1"/>
    <property type="status" value="ALT_FRAME"/>
    <property type="molecule type" value="mRNA"/>
</dbReference>
<dbReference type="EMBL" id="AC008440">
    <property type="status" value="NOT_ANNOTATED_CDS"/>
    <property type="molecule type" value="Genomic_DNA"/>
</dbReference>
<dbReference type="EMBL" id="AF234892">
    <property type="protein sequence ID" value="AAK15019.1"/>
    <property type="status" value="ALT_SEQ"/>
    <property type="molecule type" value="mRNA"/>
</dbReference>
<dbReference type="EMBL" id="AF288388">
    <property type="protein sequence ID" value="AAK20031.1"/>
    <property type="molecule type" value="mRNA"/>
</dbReference>
<dbReference type="CCDS" id="CCDS33104.1"/>
<dbReference type="RefSeq" id="NP_114101.4">
    <property type="nucleotide sequence ID" value="NM_031895.5"/>
</dbReference>
<dbReference type="SMR" id="Q8WXS5"/>
<dbReference type="BioGRID" id="121869">
    <property type="interactions" value="15"/>
</dbReference>
<dbReference type="FunCoup" id="Q8WXS5">
    <property type="interactions" value="548"/>
</dbReference>
<dbReference type="IntAct" id="Q8WXS5">
    <property type="interactions" value="10"/>
</dbReference>
<dbReference type="MINT" id="Q8WXS5"/>
<dbReference type="STRING" id="9606.ENSP00000270458"/>
<dbReference type="BindingDB" id="Q8WXS5"/>
<dbReference type="ChEMBL" id="CHEMBL4296110"/>
<dbReference type="DrugBank" id="DB13746">
    <property type="generic name" value="Bioallethrin"/>
</dbReference>
<dbReference type="DrugBank" id="DB11148">
    <property type="generic name" value="Butamben"/>
</dbReference>
<dbReference type="DrugBank" id="DB09235">
    <property type="generic name" value="Efonidipine"/>
</dbReference>
<dbReference type="DrugBank" id="DB00228">
    <property type="generic name" value="Enflurane"/>
</dbReference>
<dbReference type="DrugBank" id="DB00153">
    <property type="generic name" value="Ergocalciferol"/>
</dbReference>
<dbReference type="DrugBank" id="DB00622">
    <property type="generic name" value="Nicardipine"/>
</dbReference>
<dbReference type="DrugBank" id="DB00661">
    <property type="generic name" value="Verapamil"/>
</dbReference>
<dbReference type="TCDB" id="8.A.16.2.6">
    <property type="family name" value="the ca(+) channel auxiliary subunit Gama1-Gama8 (ccaGama) family"/>
</dbReference>
<dbReference type="GlyGen" id="Q8WXS5">
    <property type="glycosylation" value="2 sites, 1 N-linked glycan (1 site)"/>
</dbReference>
<dbReference type="iPTMnet" id="Q8WXS5"/>
<dbReference type="PhosphoSitePlus" id="Q8WXS5"/>
<dbReference type="BioMuta" id="CACNG8"/>
<dbReference type="DMDM" id="313104245"/>
<dbReference type="MassIVE" id="Q8WXS5"/>
<dbReference type="PaxDb" id="9606-ENSP00000270458"/>
<dbReference type="PeptideAtlas" id="Q8WXS5"/>
<dbReference type="ProteomicsDB" id="75095"/>
<dbReference type="Antibodypedia" id="32771">
    <property type="antibodies" value="96 antibodies from 24 providers"/>
</dbReference>
<dbReference type="DNASU" id="59283"/>
<dbReference type="Ensembl" id="ENST00000270458.4">
    <property type="protein sequence ID" value="ENSP00000270458.3"/>
    <property type="gene ID" value="ENSG00000142408.7"/>
</dbReference>
<dbReference type="GeneID" id="59283"/>
<dbReference type="KEGG" id="hsa:59283"/>
<dbReference type="MANE-Select" id="ENST00000270458.4">
    <property type="protein sequence ID" value="ENSP00000270458.3"/>
    <property type="RefSeq nucleotide sequence ID" value="NM_031895.6"/>
    <property type="RefSeq protein sequence ID" value="NP_114101.4"/>
</dbReference>
<dbReference type="UCSC" id="uc061clu.1">
    <property type="organism name" value="human"/>
</dbReference>
<dbReference type="AGR" id="HGNC:13628"/>
<dbReference type="CTD" id="59283"/>
<dbReference type="DisGeNET" id="59283"/>
<dbReference type="GeneCards" id="CACNG8"/>
<dbReference type="HGNC" id="HGNC:13628">
    <property type="gene designation" value="CACNG8"/>
</dbReference>
<dbReference type="HPA" id="ENSG00000142408">
    <property type="expression patterns" value="Tissue enriched (brain)"/>
</dbReference>
<dbReference type="MIM" id="606900">
    <property type="type" value="gene"/>
</dbReference>
<dbReference type="neXtProt" id="NX_Q8WXS5"/>
<dbReference type="OpenTargets" id="ENSG00000142408"/>
<dbReference type="PharmGKB" id="PA26022"/>
<dbReference type="VEuPathDB" id="HostDB:ENSG00000142408"/>
<dbReference type="eggNOG" id="ENOG502QUEC">
    <property type="taxonomic scope" value="Eukaryota"/>
</dbReference>
<dbReference type="GeneTree" id="ENSGT01050000244893"/>
<dbReference type="HOGENOM" id="CLU_053704_0_1_1"/>
<dbReference type="InParanoid" id="Q8WXS5"/>
<dbReference type="OMA" id="SMYNTER"/>
<dbReference type="OrthoDB" id="9990458at2759"/>
<dbReference type="PAN-GO" id="Q8WXS5">
    <property type="GO annotations" value="10 GO annotations based on evolutionary models"/>
</dbReference>
<dbReference type="PhylomeDB" id="Q8WXS5"/>
<dbReference type="TreeFam" id="TF327980"/>
<dbReference type="PathwayCommons" id="Q8WXS5"/>
<dbReference type="Reactome" id="R-HSA-399719">
    <property type="pathway name" value="Trafficking of AMPA receptors"/>
</dbReference>
<dbReference type="Reactome" id="R-HSA-5576892">
    <property type="pathway name" value="Phase 0 - rapid depolarisation"/>
</dbReference>
<dbReference type="Reactome" id="R-HSA-5576893">
    <property type="pathway name" value="Phase 2 - plateau phase"/>
</dbReference>
<dbReference type="Reactome" id="R-HSA-5682910">
    <property type="pathway name" value="LGI-ADAM interactions"/>
</dbReference>
<dbReference type="SignaLink" id="Q8WXS5"/>
<dbReference type="BioGRID-ORCS" id="59283">
    <property type="hits" value="13 hits in 1054 CRISPR screens"/>
</dbReference>
<dbReference type="ChiTaRS" id="CACNG8">
    <property type="organism name" value="human"/>
</dbReference>
<dbReference type="GenomeRNAi" id="59283"/>
<dbReference type="Pharos" id="Q8WXS5">
    <property type="development level" value="Tbio"/>
</dbReference>
<dbReference type="PRO" id="PR:Q8WXS5"/>
<dbReference type="Proteomes" id="UP000005640">
    <property type="component" value="Chromosome 19"/>
</dbReference>
<dbReference type="RNAct" id="Q8WXS5">
    <property type="molecule type" value="protein"/>
</dbReference>
<dbReference type="Bgee" id="ENSG00000142408">
    <property type="expression patterns" value="Expressed in postcentral gyrus and 73 other cell types or tissues"/>
</dbReference>
<dbReference type="ExpressionAtlas" id="Q8WXS5">
    <property type="expression patterns" value="baseline and differential"/>
</dbReference>
<dbReference type="GO" id="GO:0032281">
    <property type="term" value="C:AMPA glutamate receptor complex"/>
    <property type="evidence" value="ECO:0000250"/>
    <property type="project" value="UniProtKB"/>
</dbReference>
<dbReference type="GO" id="GO:0032590">
    <property type="term" value="C:dendrite membrane"/>
    <property type="evidence" value="ECO:0007669"/>
    <property type="project" value="Ensembl"/>
</dbReference>
<dbReference type="GO" id="GO:0030666">
    <property type="term" value="C:endocytic vesicle membrane"/>
    <property type="evidence" value="ECO:0000304"/>
    <property type="project" value="Reactome"/>
</dbReference>
<dbReference type="GO" id="GO:0098978">
    <property type="term" value="C:glutamatergic synapse"/>
    <property type="evidence" value="ECO:0007669"/>
    <property type="project" value="Ensembl"/>
</dbReference>
<dbReference type="GO" id="GO:1990454">
    <property type="term" value="C:L-type voltage-gated calcium channel complex"/>
    <property type="evidence" value="ECO:0000250"/>
    <property type="project" value="UniProtKB"/>
</dbReference>
<dbReference type="GO" id="GO:0005886">
    <property type="term" value="C:plasma membrane"/>
    <property type="evidence" value="ECO:0000304"/>
    <property type="project" value="Reactome"/>
</dbReference>
<dbReference type="GO" id="GO:0014069">
    <property type="term" value="C:postsynaptic density"/>
    <property type="evidence" value="ECO:0000250"/>
    <property type="project" value="UniProtKB"/>
</dbReference>
<dbReference type="GO" id="GO:0098839">
    <property type="term" value="C:postsynaptic density membrane"/>
    <property type="evidence" value="ECO:0000318"/>
    <property type="project" value="GO_Central"/>
</dbReference>
<dbReference type="GO" id="GO:0005891">
    <property type="term" value="C:voltage-gated calcium channel complex"/>
    <property type="evidence" value="ECO:0000303"/>
    <property type="project" value="UniProtKB"/>
</dbReference>
<dbReference type="GO" id="GO:0005246">
    <property type="term" value="F:calcium channel regulator activity"/>
    <property type="evidence" value="ECO:0000250"/>
    <property type="project" value="UniProtKB"/>
</dbReference>
<dbReference type="GO" id="GO:0016247">
    <property type="term" value="F:channel regulator activity"/>
    <property type="evidence" value="ECO:0000318"/>
    <property type="project" value="GO_Central"/>
</dbReference>
<dbReference type="GO" id="GO:0035255">
    <property type="term" value="F:ionotropic glutamate receptor binding"/>
    <property type="evidence" value="ECO:0007669"/>
    <property type="project" value="Ensembl"/>
</dbReference>
<dbReference type="GO" id="GO:0030346">
    <property type="term" value="F:protein phosphatase 2B binding"/>
    <property type="evidence" value="ECO:0007669"/>
    <property type="project" value="Ensembl"/>
</dbReference>
<dbReference type="GO" id="GO:0005245">
    <property type="term" value="F:voltage-gated calcium channel activity"/>
    <property type="evidence" value="ECO:0000318"/>
    <property type="project" value="GO_Central"/>
</dbReference>
<dbReference type="GO" id="GO:0006816">
    <property type="term" value="P:calcium ion transport"/>
    <property type="evidence" value="ECO:0000303"/>
    <property type="project" value="UniProtKB"/>
</dbReference>
<dbReference type="GO" id="GO:0051968">
    <property type="term" value="P:positive regulation of synaptic transmission, glutamatergic"/>
    <property type="evidence" value="ECO:0000318"/>
    <property type="project" value="GO_Central"/>
</dbReference>
<dbReference type="GO" id="GO:0098970">
    <property type="term" value="P:postsynaptic neurotransmitter receptor diffusion trapping"/>
    <property type="evidence" value="ECO:0000318"/>
    <property type="project" value="GO_Central"/>
</dbReference>
<dbReference type="GO" id="GO:2000311">
    <property type="term" value="P:regulation of AMPA receptor activity"/>
    <property type="evidence" value="ECO:0000314"/>
    <property type="project" value="UniProtKB"/>
</dbReference>
<dbReference type="GO" id="GO:0019226">
    <property type="term" value="P:transmission of nerve impulse"/>
    <property type="evidence" value="ECO:0000318"/>
    <property type="project" value="GO_Central"/>
</dbReference>
<dbReference type="FunFam" id="1.20.140.150:FF:000004">
    <property type="entry name" value="Voltage-dependent calcium channel gamma-4 subunit"/>
    <property type="match status" value="1"/>
</dbReference>
<dbReference type="Gene3D" id="1.20.140.150">
    <property type="match status" value="1"/>
</dbReference>
<dbReference type="InterPro" id="IPR051072">
    <property type="entry name" value="CACNG_subunit"/>
</dbReference>
<dbReference type="InterPro" id="IPR004031">
    <property type="entry name" value="PMP22/EMP/MP20/Claudin"/>
</dbReference>
<dbReference type="InterPro" id="IPR008372">
    <property type="entry name" value="VDCC_g8su"/>
</dbReference>
<dbReference type="InterPro" id="IPR008368">
    <property type="entry name" value="VDCC_gsu"/>
</dbReference>
<dbReference type="PANTHER" id="PTHR12107">
    <property type="entry name" value="VOLTAGE-DEPENDENT CALCIUM CHANNEL GAMMA SUBUNIT"/>
    <property type="match status" value="1"/>
</dbReference>
<dbReference type="PANTHER" id="PTHR12107:SF2">
    <property type="entry name" value="VOLTAGE-DEPENDENT CALCIUM CHANNEL GAMMA-8 SUBUNIT"/>
    <property type="match status" value="1"/>
</dbReference>
<dbReference type="Pfam" id="PF00822">
    <property type="entry name" value="PMP22_Claudin"/>
    <property type="match status" value="1"/>
</dbReference>
<dbReference type="PRINTS" id="PR01792">
    <property type="entry name" value="VDCCGAMMA"/>
</dbReference>
<dbReference type="PRINTS" id="PR01796">
    <property type="entry name" value="VDCCGAMMA8"/>
</dbReference>
<feature type="chain" id="PRO_0000164690" description="Voltage-dependent calcium channel gamma-8 subunit">
    <location>
        <begin position="1"/>
        <end position="425"/>
    </location>
</feature>
<feature type="transmembrane region" description="Helical" evidence="3">
    <location>
        <begin position="19"/>
        <end position="39"/>
    </location>
</feature>
<feature type="transmembrane region" description="Helical" evidence="3">
    <location>
        <begin position="129"/>
        <end position="149"/>
    </location>
</feature>
<feature type="transmembrane region" description="Helical" evidence="3">
    <location>
        <begin position="158"/>
        <end position="178"/>
    </location>
</feature>
<feature type="transmembrane region" description="Helical" evidence="3">
    <location>
        <begin position="208"/>
        <end position="228"/>
    </location>
</feature>
<feature type="transmembrane region" description="Helical" evidence="3">
    <location>
        <begin position="318"/>
        <end position="338"/>
    </location>
</feature>
<feature type="region of interest" description="Disordered" evidence="4">
    <location>
        <begin position="272"/>
        <end position="304"/>
    </location>
</feature>
<feature type="region of interest" description="Disordered" evidence="4">
    <location>
        <begin position="343"/>
        <end position="365"/>
    </location>
</feature>
<feature type="region of interest" description="Disordered" evidence="4">
    <location>
        <begin position="377"/>
        <end position="425"/>
    </location>
</feature>
<feature type="compositionally biased region" description="Low complexity" evidence="4">
    <location>
        <begin position="277"/>
        <end position="287"/>
    </location>
</feature>
<feature type="compositionally biased region" description="Gly residues" evidence="4">
    <location>
        <begin position="343"/>
        <end position="354"/>
    </location>
</feature>
<feature type="compositionally biased region" description="Pro residues" evidence="4">
    <location>
        <begin position="387"/>
        <end position="401"/>
    </location>
</feature>
<feature type="compositionally biased region" description="Polar residues" evidence="4">
    <location>
        <begin position="412"/>
        <end position="425"/>
    </location>
</feature>
<feature type="modified residue" description="Phosphoserine" evidence="1">
    <location>
        <position position="252"/>
    </location>
</feature>
<feature type="modified residue" description="Phosphoserine" evidence="1">
    <location>
        <position position="255"/>
    </location>
</feature>
<feature type="sequence conflict" description="In Ref. 3; AAK15019." evidence="8" ref="3">
    <original>E</original>
    <variation>K</variation>
    <location>
        <position position="16"/>
    </location>
</feature>
<feature type="sequence conflict" description="In Ref. 1; AAL50049." evidence="8" ref="1">
    <original>A</original>
    <variation>S</variation>
    <location>
        <position position="362"/>
    </location>
</feature>
<feature type="sequence conflict" description="In Ref. 1; AAL50049." evidence="8" ref="1">
    <original>G</original>
    <variation>R</variation>
    <location>
        <position position="386"/>
    </location>
</feature>
<feature type="sequence conflict" description="In Ref. 1; AAL50049." evidence="8" ref="1">
    <original>A</original>
    <variation>T</variation>
    <location>
        <position position="394"/>
    </location>
</feature>
<feature type="sequence conflict" description="In Ref. 1; AAL50049." evidence="8" ref="1">
    <original>E</original>
    <variation>G</variation>
    <location>
        <position position="409"/>
    </location>
</feature>
<protein>
    <recommendedName>
        <fullName evidence="8">Voltage-dependent calcium channel gamma-8 subunit</fullName>
    </recommendedName>
    <alternativeName>
        <fullName>Neuronal voltage-gated calcium channel gamma-8 subunit</fullName>
    </alternativeName>
    <alternativeName>
        <fullName>Transmembrane AMPAR regulatory protein gamma-8</fullName>
        <shortName>TARP gamma-8</shortName>
    </alternativeName>
</protein>
<sequence>MESLKRWNEERGLWCEKGVQVLLTTVGAFAAFGLMTIAISTDYWLYTRALICNTTNLTAGGDDGTPHRGGGGASEKKDPGGLTHSGLWRICCLEGLKRGVCVKINHFPEDTDYDHDSAEYLLRVVRASSIFPILSAILLLLGGVCVAASRVYKSKRNIILGAGILFVAAGLSNIIGVIVYISANAGEPGPKRDEEKKNHYSYGWSFYFGGLSFILAEVIGVLAVNIYIERSREAHCQSRSDLLKAGGGAGGSGGSGPSAILRLPSYRFRYRRRSRSSSRSSEPSPSRDASPGGPGGPGFASTDISMYTLSRDPSKGSVAAGLAGAGGGGGGAVGAFGGAAGGAGGGGGGGGGAGAERDRGGASGFLTLHNAFPKEAGGGVTVTVTGPPAPPAPAPPAPSAPAPGTLAKEAAASNTNTLNRKTTPV</sequence>
<gene>
    <name evidence="9" type="primary">CACNG8</name>
    <name type="synonym">CACNG6</name>
</gene>
<proteinExistence type="evidence at protein level"/>
<keyword id="KW-0106">Calcium</keyword>
<keyword id="KW-0107">Calcium channel</keyword>
<keyword id="KW-0109">Calcium transport</keyword>
<keyword id="KW-1003">Cell membrane</keyword>
<keyword id="KW-0407">Ion channel</keyword>
<keyword id="KW-0406">Ion transport</keyword>
<keyword id="KW-0449">Lipoprotein</keyword>
<keyword id="KW-0472">Membrane</keyword>
<keyword id="KW-0564">Palmitate</keyword>
<keyword id="KW-0597">Phosphoprotein</keyword>
<keyword id="KW-0628">Postsynaptic cell membrane</keyword>
<keyword id="KW-1267">Proteomics identification</keyword>
<keyword id="KW-1185">Reference proteome</keyword>
<keyword id="KW-0770">Synapse</keyword>
<keyword id="KW-0812">Transmembrane</keyword>
<keyword id="KW-1133">Transmembrane helix</keyword>
<keyword id="KW-0813">Transport</keyword>
<keyword id="KW-0851">Voltage-gated channel</keyword>
<accession>Q8WXS5</accession>
<accession>Q9BXT0</accession>
<accession>Q9BY23</accession>
<evidence type="ECO:0000250" key="1">
    <source>
        <dbReference type="UniProtKB" id="Q8VHW2"/>
    </source>
</evidence>
<evidence type="ECO:0000250" key="2">
    <source>
        <dbReference type="UniProtKB" id="Q8VHW5"/>
    </source>
</evidence>
<evidence type="ECO:0000255" key="3"/>
<evidence type="ECO:0000256" key="4">
    <source>
        <dbReference type="SAM" id="MobiDB-lite"/>
    </source>
</evidence>
<evidence type="ECO:0000269" key="5">
    <source>
    </source>
</evidence>
<evidence type="ECO:0000269" key="6">
    <source>
    </source>
</evidence>
<evidence type="ECO:0000269" key="7">
    <source>
    </source>
</evidence>
<evidence type="ECO:0000305" key="8"/>
<evidence type="ECO:0000312" key="9">
    <source>
        <dbReference type="HGNC" id="HGNC:13628"/>
    </source>
</evidence>